<name>RS17_STRGC</name>
<accession>A8AZL6</accession>
<feature type="chain" id="PRO_1000086863" description="Small ribosomal subunit protein uS17">
    <location>
        <begin position="1"/>
        <end position="86"/>
    </location>
</feature>
<proteinExistence type="inferred from homology"/>
<keyword id="KW-1185">Reference proteome</keyword>
<keyword id="KW-0687">Ribonucleoprotein</keyword>
<keyword id="KW-0689">Ribosomal protein</keyword>
<keyword id="KW-0694">RNA-binding</keyword>
<keyword id="KW-0699">rRNA-binding</keyword>
<gene>
    <name evidence="1" type="primary">rpsQ</name>
    <name type="ordered locus">SGO_1976</name>
</gene>
<protein>
    <recommendedName>
        <fullName evidence="1">Small ribosomal subunit protein uS17</fullName>
    </recommendedName>
    <alternativeName>
        <fullName evidence="2">30S ribosomal protein S17</fullName>
    </alternativeName>
</protein>
<evidence type="ECO:0000255" key="1">
    <source>
        <dbReference type="HAMAP-Rule" id="MF_01345"/>
    </source>
</evidence>
<evidence type="ECO:0000305" key="2"/>
<reference key="1">
    <citation type="journal article" date="2007" name="J. Bacteriol.">
        <title>Genome-wide transcriptional changes in Streptococcus gordonii in response to competence signaling peptide.</title>
        <authorList>
            <person name="Vickerman M.M."/>
            <person name="Iobst S."/>
            <person name="Jesionowski A.M."/>
            <person name="Gill S.R."/>
        </authorList>
    </citation>
    <scope>NUCLEOTIDE SEQUENCE [LARGE SCALE GENOMIC DNA]</scope>
    <source>
        <strain>Challis / ATCC 35105 / BCRC 15272 / CH1 / DL1 / V288</strain>
    </source>
</reference>
<organism>
    <name type="scientific">Streptococcus gordonii (strain Challis / ATCC 35105 / BCRC 15272 / CH1 / DL1 / V288)</name>
    <dbReference type="NCBI Taxonomy" id="467705"/>
    <lineage>
        <taxon>Bacteria</taxon>
        <taxon>Bacillati</taxon>
        <taxon>Bacillota</taxon>
        <taxon>Bacilli</taxon>
        <taxon>Lactobacillales</taxon>
        <taxon>Streptococcaceae</taxon>
        <taxon>Streptococcus</taxon>
    </lineage>
</organism>
<comment type="function">
    <text evidence="1">One of the primary rRNA binding proteins, it binds specifically to the 5'-end of 16S ribosomal RNA.</text>
</comment>
<comment type="subunit">
    <text evidence="1">Part of the 30S ribosomal subunit.</text>
</comment>
<comment type="similarity">
    <text evidence="1">Belongs to the universal ribosomal protein uS17 family.</text>
</comment>
<sequence>MERNNRKVLVGRVVSDKMDKTITVVVETKRNHPVYGKRINYSKKYKAHDENNVAKEGDIVRIMETRPLSATKRFRLVEVVEEAVII</sequence>
<dbReference type="EMBL" id="CP000725">
    <property type="protein sequence ID" value="ABV10479.1"/>
    <property type="molecule type" value="Genomic_DNA"/>
</dbReference>
<dbReference type="RefSeq" id="WP_000440801.1">
    <property type="nucleotide sequence ID" value="NC_009785.1"/>
</dbReference>
<dbReference type="SMR" id="A8AZL6"/>
<dbReference type="STRING" id="467705.SGO_1976"/>
<dbReference type="GeneID" id="93920913"/>
<dbReference type="KEGG" id="sgo:SGO_1976"/>
<dbReference type="eggNOG" id="COG0186">
    <property type="taxonomic scope" value="Bacteria"/>
</dbReference>
<dbReference type="HOGENOM" id="CLU_073626_1_0_9"/>
<dbReference type="Proteomes" id="UP000001131">
    <property type="component" value="Chromosome"/>
</dbReference>
<dbReference type="GO" id="GO:0022627">
    <property type="term" value="C:cytosolic small ribosomal subunit"/>
    <property type="evidence" value="ECO:0007669"/>
    <property type="project" value="TreeGrafter"/>
</dbReference>
<dbReference type="GO" id="GO:0019843">
    <property type="term" value="F:rRNA binding"/>
    <property type="evidence" value="ECO:0007669"/>
    <property type="project" value="UniProtKB-UniRule"/>
</dbReference>
<dbReference type="GO" id="GO:0003735">
    <property type="term" value="F:structural constituent of ribosome"/>
    <property type="evidence" value="ECO:0007669"/>
    <property type="project" value="InterPro"/>
</dbReference>
<dbReference type="GO" id="GO:0006412">
    <property type="term" value="P:translation"/>
    <property type="evidence" value="ECO:0007669"/>
    <property type="project" value="UniProtKB-UniRule"/>
</dbReference>
<dbReference type="CDD" id="cd00364">
    <property type="entry name" value="Ribosomal_uS17"/>
    <property type="match status" value="1"/>
</dbReference>
<dbReference type="FunFam" id="2.40.50.140:FF:000026">
    <property type="entry name" value="30S ribosomal protein S17"/>
    <property type="match status" value="1"/>
</dbReference>
<dbReference type="Gene3D" id="2.40.50.140">
    <property type="entry name" value="Nucleic acid-binding proteins"/>
    <property type="match status" value="1"/>
</dbReference>
<dbReference type="HAMAP" id="MF_01345_B">
    <property type="entry name" value="Ribosomal_uS17_B"/>
    <property type="match status" value="1"/>
</dbReference>
<dbReference type="InterPro" id="IPR012340">
    <property type="entry name" value="NA-bd_OB-fold"/>
</dbReference>
<dbReference type="InterPro" id="IPR000266">
    <property type="entry name" value="Ribosomal_uS17"/>
</dbReference>
<dbReference type="InterPro" id="IPR019984">
    <property type="entry name" value="Ribosomal_uS17_bact/chlr"/>
</dbReference>
<dbReference type="InterPro" id="IPR019979">
    <property type="entry name" value="Ribosomal_uS17_CS"/>
</dbReference>
<dbReference type="NCBIfam" id="NF004123">
    <property type="entry name" value="PRK05610.1"/>
    <property type="match status" value="1"/>
</dbReference>
<dbReference type="NCBIfam" id="TIGR03635">
    <property type="entry name" value="uS17_bact"/>
    <property type="match status" value="1"/>
</dbReference>
<dbReference type="PANTHER" id="PTHR10744">
    <property type="entry name" value="40S RIBOSOMAL PROTEIN S11 FAMILY MEMBER"/>
    <property type="match status" value="1"/>
</dbReference>
<dbReference type="PANTHER" id="PTHR10744:SF1">
    <property type="entry name" value="SMALL RIBOSOMAL SUBUNIT PROTEIN US17M"/>
    <property type="match status" value="1"/>
</dbReference>
<dbReference type="Pfam" id="PF00366">
    <property type="entry name" value="Ribosomal_S17"/>
    <property type="match status" value="1"/>
</dbReference>
<dbReference type="PRINTS" id="PR00973">
    <property type="entry name" value="RIBOSOMALS17"/>
</dbReference>
<dbReference type="SUPFAM" id="SSF50249">
    <property type="entry name" value="Nucleic acid-binding proteins"/>
    <property type="match status" value="1"/>
</dbReference>
<dbReference type="PROSITE" id="PS00056">
    <property type="entry name" value="RIBOSOMAL_S17"/>
    <property type="match status" value="1"/>
</dbReference>